<name>AAS_SALDC</name>
<accession>B5FUB9</accession>
<protein>
    <recommendedName>
        <fullName evidence="1">Bifunctional protein Aas</fullName>
    </recommendedName>
    <domain>
        <recommendedName>
            <fullName evidence="1">2-acylglycerophosphoethanolamine acyltransferase</fullName>
            <ecNumber evidence="1">2.3.1.40</ecNumber>
        </recommendedName>
        <alternativeName>
            <fullName evidence="1">2-acyl-GPE acyltransferase</fullName>
        </alternativeName>
        <alternativeName>
            <fullName evidence="1">Acyl-[acyl-carrier-protein]--phospholipid O-acyltransferase</fullName>
        </alternativeName>
    </domain>
    <domain>
        <recommendedName>
            <fullName evidence="1">Acyl-[acyl-carrier-protein] synthetase</fullName>
            <ecNumber evidence="1">6.2.1.20</ecNumber>
        </recommendedName>
        <alternativeName>
            <fullName evidence="1">Acyl-ACP synthetase</fullName>
        </alternativeName>
        <alternativeName>
            <fullName evidence="1">Long-chain-fatty-acid--[acyl-carrier-protein] ligase</fullName>
        </alternativeName>
    </domain>
</protein>
<evidence type="ECO:0000255" key="1">
    <source>
        <dbReference type="HAMAP-Rule" id="MF_01162"/>
    </source>
</evidence>
<reference key="1">
    <citation type="journal article" date="2011" name="J. Bacteriol.">
        <title>Comparative genomics of 28 Salmonella enterica isolates: evidence for CRISPR-mediated adaptive sublineage evolution.</title>
        <authorList>
            <person name="Fricke W.F."/>
            <person name="Mammel M.K."/>
            <person name="McDermott P.F."/>
            <person name="Tartera C."/>
            <person name="White D.G."/>
            <person name="Leclerc J.E."/>
            <person name="Ravel J."/>
            <person name="Cebula T.A."/>
        </authorList>
    </citation>
    <scope>NUCLEOTIDE SEQUENCE [LARGE SCALE GENOMIC DNA]</scope>
    <source>
        <strain>CT_02021853</strain>
    </source>
</reference>
<sequence length="719" mass="80523">MLFGFFRNLFRVLYRVRVTGDVRALQGNRVLITPNHVSFIDGMLLALFLPVRPVFAVYTSISQQWYMRWLTPLIDFVPLDPTKPMSIKHLVRLVVQGRPVVIFPEGRISVTGSLMKIYDGAGFVAAKSGATVIPLRIDGAELTPFSRLKGLVKRRLFPRIQLHILPPTQIPMPEAPRARDRRKIAGEMLHQIMMEARMAVRPRETLYESLLAAQYRYGAGKNCIEDINFTPDTYRKLLTKTLFVGRILEKYSVEGEKIGLMLPNAAISAAVIFGAVSRRRIPAMMNYTAGVKGLTSAITAAEIKTIFTSRQFLDKGKLWHLPEQLTQVRWVYLEDLKADVTLADKMWIFAHLLAPRLAQVKQQPEDAAIILFTSGSEGHPKGVVHSHKSILANVEQIKTIADFTANDRFMSALPLFHSFGLTVGLFTPLLTGAEVFLYPSPLHYRIVPELVYDRNCTVLFGTSTFLGNYARFANPYDFYRLRYVVAGAEKLQESTKQLWQDKFGLRILEGYGVTECAPVVLINVPMAAKPGTVGRILPGMDARLLAVPGIENGGRLQLKGPNIMNGYLRVEKPGVLEVPSAENARGETERGWYDTGDIVRFDENGFVQIQGRAKRFAKIAGEMVSLEMVEQLALGVSADKMHATAIKSDASKGEALVLFTTDSELTREKLQHYAREHGIPELAVPRDIRYLKQLPLLGSGKPDFVTLKSWVDAPEQHHE</sequence>
<comment type="function">
    <text evidence="1">Plays a role in lysophospholipid acylation. Transfers fatty acids to the 1-position via an enzyme-bound acyl-ACP intermediate in the presence of ATP and magnesium. Its physiological function is to regenerate phosphatidylethanolamine from 2-acyl-glycero-3-phosphoethanolamine (2-acyl-GPE) formed by transacylation reactions or degradation by phospholipase A1.</text>
</comment>
<comment type="catalytic activity">
    <reaction evidence="1">
        <text>a 2-acyl-sn-glycero-3-phosphoethanolamine + a fatty acyl-[ACP] = a 1,2-diacyl-sn-glycero-3-phosphoethanolamine + holo-[ACP]</text>
        <dbReference type="Rhea" id="RHEA:10304"/>
        <dbReference type="Rhea" id="RHEA-COMP:9685"/>
        <dbReference type="Rhea" id="RHEA-COMP:14125"/>
        <dbReference type="ChEBI" id="CHEBI:64479"/>
        <dbReference type="ChEBI" id="CHEBI:64612"/>
        <dbReference type="ChEBI" id="CHEBI:65213"/>
        <dbReference type="ChEBI" id="CHEBI:138651"/>
        <dbReference type="EC" id="2.3.1.40"/>
    </reaction>
</comment>
<comment type="catalytic activity">
    <reaction evidence="1">
        <text>a long-chain fatty acid + holo-[ACP] + ATP = a long-chain fatty acyl-[ACP] + AMP + diphosphate</text>
        <dbReference type="Rhea" id="RHEA:45588"/>
        <dbReference type="Rhea" id="RHEA-COMP:9685"/>
        <dbReference type="Rhea" id="RHEA-COMP:12682"/>
        <dbReference type="ChEBI" id="CHEBI:30616"/>
        <dbReference type="ChEBI" id="CHEBI:33019"/>
        <dbReference type="ChEBI" id="CHEBI:57560"/>
        <dbReference type="ChEBI" id="CHEBI:64479"/>
        <dbReference type="ChEBI" id="CHEBI:133243"/>
        <dbReference type="ChEBI" id="CHEBI:456215"/>
        <dbReference type="EC" id="6.2.1.20"/>
    </reaction>
</comment>
<comment type="subcellular location">
    <subcellularLocation>
        <location evidence="1">Cell inner membrane</location>
        <topology evidence="1">Multi-pass membrane protein</topology>
    </subcellularLocation>
</comment>
<comment type="similarity">
    <text evidence="1">In the N-terminal section; belongs to the 2-acyl-GPE acetyltransferase family.</text>
</comment>
<comment type="similarity">
    <text evidence="1">In the C-terminal section; belongs to the ATP-dependent AMP-binding enzyme family.</text>
</comment>
<gene>
    <name evidence="1" type="primary">aas</name>
    <name type="ordered locus">SeD_A3338</name>
</gene>
<organism>
    <name type="scientific">Salmonella dublin (strain CT_02021853)</name>
    <dbReference type="NCBI Taxonomy" id="439851"/>
    <lineage>
        <taxon>Bacteria</taxon>
        <taxon>Pseudomonadati</taxon>
        <taxon>Pseudomonadota</taxon>
        <taxon>Gammaproteobacteria</taxon>
        <taxon>Enterobacterales</taxon>
        <taxon>Enterobacteriaceae</taxon>
        <taxon>Salmonella</taxon>
    </lineage>
</organism>
<dbReference type="EC" id="2.3.1.40" evidence="1"/>
<dbReference type="EC" id="6.2.1.20" evidence="1"/>
<dbReference type="EMBL" id="CP001144">
    <property type="protein sequence ID" value="ACH77215.1"/>
    <property type="molecule type" value="Genomic_DNA"/>
</dbReference>
<dbReference type="RefSeq" id="WP_000896111.1">
    <property type="nucleotide sequence ID" value="NC_011205.1"/>
</dbReference>
<dbReference type="SMR" id="B5FUB9"/>
<dbReference type="KEGG" id="sed:SeD_A3338"/>
<dbReference type="HOGENOM" id="CLU_000022_59_8_6"/>
<dbReference type="Proteomes" id="UP000008322">
    <property type="component" value="Chromosome"/>
</dbReference>
<dbReference type="GO" id="GO:0005886">
    <property type="term" value="C:plasma membrane"/>
    <property type="evidence" value="ECO:0007669"/>
    <property type="project" value="UniProtKB-SubCell"/>
</dbReference>
<dbReference type="GO" id="GO:0008779">
    <property type="term" value="F:acyl-[acyl-carrier-protein]-phospholipid O-acyltransferase activity"/>
    <property type="evidence" value="ECO:0007669"/>
    <property type="project" value="UniProtKB-UniRule"/>
</dbReference>
<dbReference type="GO" id="GO:0005524">
    <property type="term" value="F:ATP binding"/>
    <property type="evidence" value="ECO:0007669"/>
    <property type="project" value="UniProtKB-KW"/>
</dbReference>
<dbReference type="GO" id="GO:0008922">
    <property type="term" value="F:long-chain fatty acid [acyl-carrier-protein] ligase activity"/>
    <property type="evidence" value="ECO:0007669"/>
    <property type="project" value="UniProtKB-UniRule"/>
</dbReference>
<dbReference type="GO" id="GO:0031956">
    <property type="term" value="F:medium-chain fatty acid-CoA ligase activity"/>
    <property type="evidence" value="ECO:0007669"/>
    <property type="project" value="TreeGrafter"/>
</dbReference>
<dbReference type="GO" id="GO:0006631">
    <property type="term" value="P:fatty acid metabolic process"/>
    <property type="evidence" value="ECO:0007669"/>
    <property type="project" value="InterPro"/>
</dbReference>
<dbReference type="GO" id="GO:0008654">
    <property type="term" value="P:phospholipid biosynthetic process"/>
    <property type="evidence" value="ECO:0007669"/>
    <property type="project" value="InterPro"/>
</dbReference>
<dbReference type="CDD" id="cd05909">
    <property type="entry name" value="AAS_C"/>
    <property type="match status" value="1"/>
</dbReference>
<dbReference type="CDD" id="cd07989">
    <property type="entry name" value="LPLAT_AGPAT-like"/>
    <property type="match status" value="1"/>
</dbReference>
<dbReference type="FunFam" id="3.30.300.30:FF:000009">
    <property type="entry name" value="Bifunctional protein Aas"/>
    <property type="match status" value="1"/>
</dbReference>
<dbReference type="FunFam" id="3.40.50.12780:FF:000009">
    <property type="entry name" value="Bifunctional protein Aas"/>
    <property type="match status" value="1"/>
</dbReference>
<dbReference type="Gene3D" id="3.30.300.30">
    <property type="match status" value="1"/>
</dbReference>
<dbReference type="Gene3D" id="3.40.50.12780">
    <property type="entry name" value="N-terminal domain of ligase-like"/>
    <property type="match status" value="1"/>
</dbReference>
<dbReference type="HAMAP" id="MF_01162">
    <property type="entry name" value="Aas"/>
    <property type="match status" value="1"/>
</dbReference>
<dbReference type="InterPro" id="IPR023775">
    <property type="entry name" value="Aas"/>
</dbReference>
<dbReference type="InterPro" id="IPR045851">
    <property type="entry name" value="AMP-bd_C_sf"/>
</dbReference>
<dbReference type="InterPro" id="IPR020845">
    <property type="entry name" value="AMP-binding_CS"/>
</dbReference>
<dbReference type="InterPro" id="IPR000873">
    <property type="entry name" value="AMP-dep_synth/lig_dom"/>
</dbReference>
<dbReference type="InterPro" id="IPR042099">
    <property type="entry name" value="ANL_N_sf"/>
</dbReference>
<dbReference type="InterPro" id="IPR002123">
    <property type="entry name" value="Plipid/glycerol_acylTrfase"/>
</dbReference>
<dbReference type="NCBIfam" id="NF005959">
    <property type="entry name" value="PRK08043.1"/>
    <property type="match status" value="1"/>
</dbReference>
<dbReference type="PANTHER" id="PTHR43201">
    <property type="entry name" value="ACYL-COA SYNTHETASE"/>
    <property type="match status" value="1"/>
</dbReference>
<dbReference type="PANTHER" id="PTHR43201:SF8">
    <property type="entry name" value="ACYL-COA SYNTHETASE FAMILY MEMBER 3"/>
    <property type="match status" value="1"/>
</dbReference>
<dbReference type="Pfam" id="PF01553">
    <property type="entry name" value="Acyltransferase"/>
    <property type="match status" value="1"/>
</dbReference>
<dbReference type="Pfam" id="PF00501">
    <property type="entry name" value="AMP-binding"/>
    <property type="match status" value="1"/>
</dbReference>
<dbReference type="SMART" id="SM00563">
    <property type="entry name" value="PlsC"/>
    <property type="match status" value="1"/>
</dbReference>
<dbReference type="SUPFAM" id="SSF56801">
    <property type="entry name" value="Acetyl-CoA synthetase-like"/>
    <property type="match status" value="1"/>
</dbReference>
<dbReference type="SUPFAM" id="SSF69593">
    <property type="entry name" value="Glycerol-3-phosphate (1)-acyltransferase"/>
    <property type="match status" value="1"/>
</dbReference>
<dbReference type="PROSITE" id="PS00455">
    <property type="entry name" value="AMP_BINDING"/>
    <property type="match status" value="1"/>
</dbReference>
<feature type="chain" id="PRO_1000137896" description="Bifunctional protein Aas">
    <location>
        <begin position="1"/>
        <end position="719"/>
    </location>
</feature>
<feature type="transmembrane region" description="Helical" evidence="1">
    <location>
        <begin position="258"/>
        <end position="277"/>
    </location>
</feature>
<feature type="transmembrane region" description="Helical" evidence="1">
    <location>
        <begin position="409"/>
        <end position="433"/>
    </location>
</feature>
<feature type="region of interest" description="Acyltransferase">
    <location>
        <begin position="15"/>
        <end position="138"/>
    </location>
</feature>
<feature type="region of interest" description="AMP-binding">
    <location>
        <begin position="233"/>
        <end position="646"/>
    </location>
</feature>
<feature type="active site" evidence="1">
    <location>
        <position position="36"/>
    </location>
</feature>
<keyword id="KW-0012">Acyltransferase</keyword>
<keyword id="KW-0067">ATP-binding</keyword>
<keyword id="KW-0997">Cell inner membrane</keyword>
<keyword id="KW-1003">Cell membrane</keyword>
<keyword id="KW-0436">Ligase</keyword>
<keyword id="KW-0472">Membrane</keyword>
<keyword id="KW-0511">Multifunctional enzyme</keyword>
<keyword id="KW-0547">Nucleotide-binding</keyword>
<keyword id="KW-0808">Transferase</keyword>
<keyword id="KW-0812">Transmembrane</keyword>
<keyword id="KW-1133">Transmembrane helix</keyword>
<proteinExistence type="inferred from homology"/>